<proteinExistence type="inferred from homology"/>
<accession>B4RJZ8</accession>
<organism>
    <name type="scientific">Neisseria gonorrhoeae (strain NCCP11945)</name>
    <dbReference type="NCBI Taxonomy" id="521006"/>
    <lineage>
        <taxon>Bacteria</taxon>
        <taxon>Pseudomonadati</taxon>
        <taxon>Pseudomonadota</taxon>
        <taxon>Betaproteobacteria</taxon>
        <taxon>Neisseriales</taxon>
        <taxon>Neisseriaceae</taxon>
        <taxon>Neisseria</taxon>
    </lineage>
</organism>
<sequence>MKGVYFVSGIDTDIGKTVATGMLAKQLLQQGKSVITQKPVQTGCQDIAEDIAVHRKIMGIPMQEADEQRLTMPEIFSHPASPHLAARLDGRGLDLDKIRTATQELAAQYEVVLVEGAGGLMVPLTEKLLTIDHIQQQAYPVILVTSGRLGSINHTLLSFVVLKQYGIRLHSLVFNHIHDSRDAHVAQDSLNYLQCRLKADFPEAEWMELAKTGAV</sequence>
<keyword id="KW-0067">ATP-binding</keyword>
<keyword id="KW-0093">Biotin biosynthesis</keyword>
<keyword id="KW-0963">Cytoplasm</keyword>
<keyword id="KW-0436">Ligase</keyword>
<keyword id="KW-0460">Magnesium</keyword>
<keyword id="KW-0479">Metal-binding</keyword>
<keyword id="KW-0547">Nucleotide-binding</keyword>
<name>BIOD_NEIG2</name>
<protein>
    <recommendedName>
        <fullName evidence="1">ATP-dependent dethiobiotin synthetase BioD</fullName>
        <ecNumber evidence="1">6.3.3.3</ecNumber>
    </recommendedName>
    <alternativeName>
        <fullName evidence="1">DTB synthetase</fullName>
        <shortName evidence="1">DTBS</shortName>
    </alternativeName>
    <alternativeName>
        <fullName evidence="1">Dethiobiotin synthase</fullName>
    </alternativeName>
</protein>
<comment type="function">
    <text evidence="1">Catalyzes a mechanistically unusual reaction, the ATP-dependent insertion of CO2 between the N7 and N8 nitrogen atoms of 7,8-diaminopelargonic acid (DAPA, also called 7,8-diammoniononanoate) to form a ureido ring.</text>
</comment>
<comment type="catalytic activity">
    <reaction evidence="1">
        <text>(7R,8S)-7,8-diammoniononanoate + CO2 + ATP = (4R,5S)-dethiobiotin + ADP + phosphate + 3 H(+)</text>
        <dbReference type="Rhea" id="RHEA:15805"/>
        <dbReference type="ChEBI" id="CHEBI:15378"/>
        <dbReference type="ChEBI" id="CHEBI:16526"/>
        <dbReference type="ChEBI" id="CHEBI:30616"/>
        <dbReference type="ChEBI" id="CHEBI:43474"/>
        <dbReference type="ChEBI" id="CHEBI:149469"/>
        <dbReference type="ChEBI" id="CHEBI:149473"/>
        <dbReference type="ChEBI" id="CHEBI:456216"/>
        <dbReference type="EC" id="6.3.3.3"/>
    </reaction>
</comment>
<comment type="cofactor">
    <cofactor evidence="1">
        <name>Mg(2+)</name>
        <dbReference type="ChEBI" id="CHEBI:18420"/>
    </cofactor>
</comment>
<comment type="pathway">
    <text evidence="1">Cofactor biosynthesis; biotin biosynthesis; biotin from 7,8-diaminononanoate: step 1/2.</text>
</comment>
<comment type="subunit">
    <text evidence="1">Homodimer.</text>
</comment>
<comment type="subcellular location">
    <subcellularLocation>
        <location evidence="1">Cytoplasm</location>
    </subcellularLocation>
</comment>
<comment type="similarity">
    <text evidence="1">Belongs to the dethiobiotin synthetase family.</text>
</comment>
<gene>
    <name evidence="1" type="primary">bioD</name>
    <name type="ordered locus">NGK_0458</name>
</gene>
<feature type="chain" id="PRO_1000119878" description="ATP-dependent dethiobiotin synthetase BioD">
    <location>
        <begin position="1"/>
        <end position="215"/>
    </location>
</feature>
<feature type="active site" evidence="1">
    <location>
        <position position="38"/>
    </location>
</feature>
<feature type="binding site" evidence="1">
    <location>
        <begin position="13"/>
        <end position="18"/>
    </location>
    <ligand>
        <name>ATP</name>
        <dbReference type="ChEBI" id="CHEBI:30616"/>
    </ligand>
</feature>
<feature type="binding site" evidence="1">
    <location>
        <position position="17"/>
    </location>
    <ligand>
        <name>Mg(2+)</name>
        <dbReference type="ChEBI" id="CHEBI:18420"/>
    </ligand>
</feature>
<feature type="binding site" evidence="1">
    <location>
        <position position="42"/>
    </location>
    <ligand>
        <name>substrate</name>
    </ligand>
</feature>
<feature type="binding site" evidence="1">
    <location>
        <position position="50"/>
    </location>
    <ligand>
        <name>ATP</name>
        <dbReference type="ChEBI" id="CHEBI:30616"/>
    </ligand>
</feature>
<feature type="binding site" evidence="1">
    <location>
        <position position="50"/>
    </location>
    <ligand>
        <name>Mg(2+)</name>
        <dbReference type="ChEBI" id="CHEBI:18420"/>
    </ligand>
</feature>
<feature type="binding site" evidence="1">
    <location>
        <begin position="115"/>
        <end position="118"/>
    </location>
    <ligand>
        <name>ATP</name>
        <dbReference type="ChEBI" id="CHEBI:30616"/>
    </ligand>
</feature>
<feature type="binding site" evidence="1">
    <location>
        <position position="115"/>
    </location>
    <ligand>
        <name>Mg(2+)</name>
        <dbReference type="ChEBI" id="CHEBI:18420"/>
    </ligand>
</feature>
<feature type="binding site" evidence="1">
    <location>
        <begin position="175"/>
        <end position="176"/>
    </location>
    <ligand>
        <name>ATP</name>
        <dbReference type="ChEBI" id="CHEBI:30616"/>
    </ligand>
</feature>
<reference key="1">
    <citation type="journal article" date="2008" name="J. Bacteriol.">
        <title>Complete genome sequence of Neisseria gonorrhoeae NCCP11945.</title>
        <authorList>
            <person name="Chung G.T."/>
            <person name="Yoo J.S."/>
            <person name="Oh H.B."/>
            <person name="Lee Y.S."/>
            <person name="Cha S.H."/>
            <person name="Kim S.J."/>
            <person name="Yoo C.K."/>
        </authorList>
    </citation>
    <scope>NUCLEOTIDE SEQUENCE [LARGE SCALE GENOMIC DNA]</scope>
    <source>
        <strain>NCCP11945</strain>
    </source>
</reference>
<evidence type="ECO:0000255" key="1">
    <source>
        <dbReference type="HAMAP-Rule" id="MF_00336"/>
    </source>
</evidence>
<dbReference type="EC" id="6.3.3.3" evidence="1"/>
<dbReference type="EMBL" id="CP001050">
    <property type="protein sequence ID" value="ACF29149.1"/>
    <property type="molecule type" value="Genomic_DNA"/>
</dbReference>
<dbReference type="RefSeq" id="WP_003690778.1">
    <property type="nucleotide sequence ID" value="NC_011035.1"/>
</dbReference>
<dbReference type="SMR" id="B4RJZ8"/>
<dbReference type="GeneID" id="66752646"/>
<dbReference type="KEGG" id="ngk:NGK_0458"/>
<dbReference type="HOGENOM" id="CLU_072551_3_0_4"/>
<dbReference type="UniPathway" id="UPA00078">
    <property type="reaction ID" value="UER00161"/>
</dbReference>
<dbReference type="Proteomes" id="UP000002564">
    <property type="component" value="Chromosome"/>
</dbReference>
<dbReference type="GO" id="GO:0005829">
    <property type="term" value="C:cytosol"/>
    <property type="evidence" value="ECO:0007669"/>
    <property type="project" value="TreeGrafter"/>
</dbReference>
<dbReference type="GO" id="GO:0005524">
    <property type="term" value="F:ATP binding"/>
    <property type="evidence" value="ECO:0007669"/>
    <property type="project" value="UniProtKB-UniRule"/>
</dbReference>
<dbReference type="GO" id="GO:0004141">
    <property type="term" value="F:dethiobiotin synthase activity"/>
    <property type="evidence" value="ECO:0007669"/>
    <property type="project" value="UniProtKB-UniRule"/>
</dbReference>
<dbReference type="GO" id="GO:0000287">
    <property type="term" value="F:magnesium ion binding"/>
    <property type="evidence" value="ECO:0007669"/>
    <property type="project" value="UniProtKB-UniRule"/>
</dbReference>
<dbReference type="GO" id="GO:0009102">
    <property type="term" value="P:biotin biosynthetic process"/>
    <property type="evidence" value="ECO:0007669"/>
    <property type="project" value="UniProtKB-UniRule"/>
</dbReference>
<dbReference type="CDD" id="cd03109">
    <property type="entry name" value="DTBS"/>
    <property type="match status" value="1"/>
</dbReference>
<dbReference type="FunFam" id="3.40.50.300:FF:000292">
    <property type="entry name" value="ATP-dependent dethiobiotin synthetase BioD"/>
    <property type="match status" value="1"/>
</dbReference>
<dbReference type="Gene3D" id="3.40.50.300">
    <property type="entry name" value="P-loop containing nucleotide triphosphate hydrolases"/>
    <property type="match status" value="1"/>
</dbReference>
<dbReference type="HAMAP" id="MF_00336">
    <property type="entry name" value="BioD"/>
    <property type="match status" value="1"/>
</dbReference>
<dbReference type="InterPro" id="IPR004472">
    <property type="entry name" value="DTB_synth_BioD"/>
</dbReference>
<dbReference type="InterPro" id="IPR027417">
    <property type="entry name" value="P-loop_NTPase"/>
</dbReference>
<dbReference type="NCBIfam" id="TIGR00347">
    <property type="entry name" value="bioD"/>
    <property type="match status" value="1"/>
</dbReference>
<dbReference type="PANTHER" id="PTHR43210:SF2">
    <property type="entry name" value="ATP-DEPENDENT DETHIOBIOTIN SYNTHETASE BIOD 2"/>
    <property type="match status" value="1"/>
</dbReference>
<dbReference type="PANTHER" id="PTHR43210">
    <property type="entry name" value="DETHIOBIOTIN SYNTHETASE"/>
    <property type="match status" value="1"/>
</dbReference>
<dbReference type="Pfam" id="PF13500">
    <property type="entry name" value="AAA_26"/>
    <property type="match status" value="1"/>
</dbReference>
<dbReference type="PIRSF" id="PIRSF006755">
    <property type="entry name" value="DTB_synth"/>
    <property type="match status" value="1"/>
</dbReference>
<dbReference type="SUPFAM" id="SSF52540">
    <property type="entry name" value="P-loop containing nucleoside triphosphate hydrolases"/>
    <property type="match status" value="1"/>
</dbReference>